<gene>
    <name type="ordered locus">SPy_2205</name>
    <name type="ordered locus">M5005_Spy1856</name>
</gene>
<evidence type="ECO:0000255" key="1"/>
<evidence type="ECO:0000305" key="2"/>
<keyword id="KW-1003">Cell membrane</keyword>
<keyword id="KW-0472">Membrane</keyword>
<keyword id="KW-1185">Reference proteome</keyword>
<keyword id="KW-0762">Sugar transport</keyword>
<keyword id="KW-0812">Transmembrane</keyword>
<keyword id="KW-1133">Transmembrane helix</keyword>
<keyword id="KW-0813">Transport</keyword>
<proteinExistence type="inferred from homology"/>
<protein>
    <recommendedName>
        <fullName>Putative sugar uptake protein SPy_2205/M5005_Spy1856</fullName>
    </recommendedName>
</protein>
<accession>P0C0G9</accession>
<accession>Q48W01</accession>
<accession>Q54615</accession>
<accession>Q99XH5</accession>
<organism>
    <name type="scientific">Streptococcus pyogenes serotype M1</name>
    <dbReference type="NCBI Taxonomy" id="301447"/>
    <lineage>
        <taxon>Bacteria</taxon>
        <taxon>Bacillati</taxon>
        <taxon>Bacillota</taxon>
        <taxon>Bacilli</taxon>
        <taxon>Lactobacillales</taxon>
        <taxon>Streptococcaceae</taxon>
        <taxon>Streptococcus</taxon>
    </lineage>
</organism>
<feature type="chain" id="PRO_0000213663" description="Putative sugar uptake protein SPy_2205/M5005_Spy1856">
    <location>
        <begin position="1"/>
        <end position="287"/>
    </location>
</feature>
<feature type="transmembrane region" description="Helical" evidence="1">
    <location>
        <begin position="1"/>
        <end position="21"/>
    </location>
</feature>
<feature type="transmembrane region" description="Helical" evidence="1">
    <location>
        <begin position="30"/>
        <end position="50"/>
    </location>
</feature>
<feature type="transmembrane region" description="Helical" evidence="1">
    <location>
        <begin position="52"/>
        <end position="72"/>
    </location>
</feature>
<feature type="transmembrane region" description="Helical" evidence="1">
    <location>
        <begin position="88"/>
        <end position="108"/>
    </location>
</feature>
<feature type="transmembrane region" description="Helical" evidence="1">
    <location>
        <begin position="114"/>
        <end position="134"/>
    </location>
</feature>
<feature type="transmembrane region" description="Helical" evidence="1">
    <location>
        <begin position="157"/>
        <end position="177"/>
    </location>
</feature>
<feature type="transmembrane region" description="Helical" evidence="1">
    <location>
        <begin position="180"/>
        <end position="200"/>
    </location>
</feature>
<feature type="transmembrane region" description="Helical" evidence="1">
    <location>
        <begin position="213"/>
        <end position="233"/>
    </location>
</feature>
<feature type="transmembrane region" description="Helical" evidence="1">
    <location>
        <begin position="236"/>
        <end position="256"/>
    </location>
</feature>
<feature type="transmembrane region" description="Helical" evidence="1">
    <location>
        <begin position="267"/>
        <end position="287"/>
    </location>
</feature>
<name>Y2205_STRP1</name>
<comment type="subcellular location">
    <subcellularLocation>
        <location evidence="2">Cell membrane</location>
        <topology evidence="2">Multi-pass membrane protein</topology>
    </subcellularLocation>
</comment>
<comment type="similarity">
    <text evidence="2">Belongs to the GRP transporter (TC 2.A.7.5) family.</text>
</comment>
<comment type="sequence caution" evidence="2">
    <conflict type="erroneous initiation">
        <sequence resource="EMBL-CDS" id="AAK34833"/>
    </conflict>
</comment>
<comment type="sequence caution" evidence="2">
    <conflict type="erroneous initiation">
        <sequence resource="EMBL-CDS" id="AAZ52474"/>
    </conflict>
</comment>
<reference key="1">
    <citation type="journal article" date="2001" name="Proc. Natl. Acad. Sci. U.S.A.">
        <title>Complete genome sequence of an M1 strain of Streptococcus pyogenes.</title>
        <authorList>
            <person name="Ferretti J.J."/>
            <person name="McShan W.M."/>
            <person name="Ajdic D.J."/>
            <person name="Savic D.J."/>
            <person name="Savic G."/>
            <person name="Lyon K."/>
            <person name="Primeaux C."/>
            <person name="Sezate S."/>
            <person name="Suvorov A.N."/>
            <person name="Kenton S."/>
            <person name="Lai H.S."/>
            <person name="Lin S.P."/>
            <person name="Qian Y."/>
            <person name="Jia H.G."/>
            <person name="Najar F.Z."/>
            <person name="Ren Q."/>
            <person name="Zhu H."/>
            <person name="Song L."/>
            <person name="White J."/>
            <person name="Yuan X."/>
            <person name="Clifton S.W."/>
            <person name="Roe B.A."/>
            <person name="McLaughlin R.E."/>
        </authorList>
    </citation>
    <scope>NUCLEOTIDE SEQUENCE [LARGE SCALE GENOMIC DNA]</scope>
    <source>
        <strain>ATCC 700294 / SF370 / Serotype M1</strain>
    </source>
</reference>
<reference key="2">
    <citation type="journal article" date="2005" name="J. Infect. Dis.">
        <title>Evolutionary origin and emergence of a highly successful clone of serotype M1 group A Streptococcus involved multiple horizontal gene transfer events.</title>
        <authorList>
            <person name="Sumby P."/>
            <person name="Porcella S.F."/>
            <person name="Madrigal A.G."/>
            <person name="Barbian K.D."/>
            <person name="Virtaneva K."/>
            <person name="Ricklefs S.M."/>
            <person name="Sturdevant D.E."/>
            <person name="Graham M.R."/>
            <person name="Vuopio-Varkila J."/>
            <person name="Hoe N.P."/>
            <person name="Musser J.M."/>
        </authorList>
    </citation>
    <scope>NUCLEOTIDE SEQUENCE [LARGE SCALE GENOMIC DNA]</scope>
    <source>
        <strain>ATCC BAA-947 / MGAS5005 / Serotype M1</strain>
    </source>
</reference>
<sequence>MEGIFYALIPMFTWGSIGFVSNKIGGKPSQQTLGMTFGALLFSLAVWLIVRPEMTLQLWLFGILGGFIWSIGQTGQFHAMQYMGVSVANPLSSGSQLVLGSLIGVLVFHEWTRPMQFVVGSLALLLLIVGFYFSSKQDDANAQVNHLHNFSKGFRALTYSTIGYVMYAVLFNNIMKFEVLSVILPMAVGMVLGAITFMSFKISIDQYVIKNSVVGLLWGIGNIFMLLAASKAGLAIAFSFSQLGAIISIVGGILFLGETKTKKEMRWVVTGIICFIVGAILLGVVKS</sequence>
<dbReference type="EMBL" id="AE004092">
    <property type="protein sequence ID" value="AAK34833.1"/>
    <property type="status" value="ALT_INIT"/>
    <property type="molecule type" value="Genomic_DNA"/>
</dbReference>
<dbReference type="EMBL" id="CP000017">
    <property type="protein sequence ID" value="AAZ52474.1"/>
    <property type="status" value="ALT_INIT"/>
    <property type="molecule type" value="Genomic_DNA"/>
</dbReference>
<dbReference type="RefSeq" id="NP_270112.1">
    <property type="nucleotide sequence ID" value="NC_002737.2"/>
</dbReference>
<dbReference type="SMR" id="P0C0G9"/>
<dbReference type="PaxDb" id="1314-HKU360_01966"/>
<dbReference type="KEGG" id="spy:SPy_2205"/>
<dbReference type="KEGG" id="spz:M5005_Spy1856"/>
<dbReference type="PATRIC" id="fig|160490.10.peg.1910"/>
<dbReference type="HOGENOM" id="CLU_076024_0_0_9"/>
<dbReference type="OMA" id="FMFISAA"/>
<dbReference type="Proteomes" id="UP000000750">
    <property type="component" value="Chromosome"/>
</dbReference>
<dbReference type="GO" id="GO:0005886">
    <property type="term" value="C:plasma membrane"/>
    <property type="evidence" value="ECO:0007669"/>
    <property type="project" value="UniProtKB-SubCell"/>
</dbReference>
<dbReference type="GO" id="GO:0015144">
    <property type="term" value="F:carbohydrate transmembrane transporter activity"/>
    <property type="evidence" value="ECO:0007669"/>
    <property type="project" value="InterPro"/>
</dbReference>
<dbReference type="CDD" id="cd23110">
    <property type="entry name" value="GRP"/>
    <property type="match status" value="1"/>
</dbReference>
<dbReference type="InterPro" id="IPR010651">
    <property type="entry name" value="Sugar_transport"/>
</dbReference>
<dbReference type="NCBIfam" id="TIGR00776">
    <property type="entry name" value="RhaT"/>
    <property type="match status" value="1"/>
</dbReference>
<dbReference type="PANTHER" id="PTHR16119">
    <property type="entry name" value="TRANSMEMBRANE PROTEIN 144"/>
    <property type="match status" value="1"/>
</dbReference>
<dbReference type="PANTHER" id="PTHR16119:SF17">
    <property type="entry name" value="TRANSMEMBRANE PROTEIN 144"/>
    <property type="match status" value="1"/>
</dbReference>
<dbReference type="Pfam" id="PF06800">
    <property type="entry name" value="Sugar_transport"/>
    <property type="match status" value="1"/>
</dbReference>
<dbReference type="SUPFAM" id="SSF103481">
    <property type="entry name" value="Multidrug resistance efflux transporter EmrE"/>
    <property type="match status" value="1"/>
</dbReference>